<gene>
    <name evidence="8 10" type="primary">Bex4</name>
</gene>
<protein>
    <recommendedName>
        <fullName evidence="9">Protein BEX4</fullName>
    </recommendedName>
    <alternativeName>
        <fullName evidence="10">Brain-expressed X-linked protein 4</fullName>
    </alternativeName>
</protein>
<dbReference type="EMBL" id="AY833558">
    <property type="protein sequence ID" value="AAX40676.1"/>
    <property type="molecule type" value="mRNA"/>
</dbReference>
<dbReference type="EMBL" id="AK010400">
    <property type="protein sequence ID" value="BAB26911.1"/>
    <property type="molecule type" value="mRNA"/>
</dbReference>
<dbReference type="CCDS" id="CCDS30414.1"/>
<dbReference type="RefSeq" id="NP_001346498.1">
    <property type="nucleotide sequence ID" value="NM_001359569.1"/>
</dbReference>
<dbReference type="RefSeq" id="NP_001346499.1">
    <property type="nucleotide sequence ID" value="NM_001359570.1"/>
</dbReference>
<dbReference type="RefSeq" id="NP_997622.1">
    <property type="nucleotide sequence ID" value="NM_212457.3"/>
</dbReference>
<dbReference type="SMR" id="Q9CWT2"/>
<dbReference type="FunCoup" id="Q9CWT2">
    <property type="interactions" value="141"/>
</dbReference>
<dbReference type="STRING" id="10090.ENSMUSP00000112226"/>
<dbReference type="iPTMnet" id="Q9CWT2"/>
<dbReference type="PhosphoSitePlus" id="Q9CWT2"/>
<dbReference type="PaxDb" id="10090-ENSMUSP00000112226"/>
<dbReference type="ProteomicsDB" id="273672"/>
<dbReference type="Ensembl" id="ENSMUST00000116527.2">
    <property type="protein sequence ID" value="ENSMUSP00000112226.2"/>
    <property type="gene ID" value="ENSMUSG00000047844.4"/>
</dbReference>
<dbReference type="GeneID" id="406217"/>
<dbReference type="KEGG" id="mmu:406217"/>
<dbReference type="UCSC" id="uc009uic.2">
    <property type="organism name" value="mouse"/>
</dbReference>
<dbReference type="AGR" id="MGI:3606746"/>
<dbReference type="CTD" id="56271"/>
<dbReference type="MGI" id="MGI:3606746">
    <property type="gene designation" value="Bex4"/>
</dbReference>
<dbReference type="VEuPathDB" id="HostDB:ENSMUSG00000047844"/>
<dbReference type="eggNOG" id="ENOG502TDUR">
    <property type="taxonomic scope" value="Eukaryota"/>
</dbReference>
<dbReference type="GeneTree" id="ENSGT00940000162932"/>
<dbReference type="HOGENOM" id="CLU_123122_0_0_1"/>
<dbReference type="InParanoid" id="Q9CWT2"/>
<dbReference type="OMA" id="WAIPSRH"/>
<dbReference type="OrthoDB" id="9836927at2759"/>
<dbReference type="PhylomeDB" id="Q9CWT2"/>
<dbReference type="TreeFam" id="TF337909"/>
<dbReference type="BioGRID-ORCS" id="406217">
    <property type="hits" value="3 hits in 77 CRISPR screens"/>
</dbReference>
<dbReference type="ChiTaRS" id="Bex4">
    <property type="organism name" value="mouse"/>
</dbReference>
<dbReference type="PRO" id="PR:Q9CWT2"/>
<dbReference type="Proteomes" id="UP000000589">
    <property type="component" value="Chromosome X"/>
</dbReference>
<dbReference type="RNAct" id="Q9CWT2">
    <property type="molecule type" value="protein"/>
</dbReference>
<dbReference type="Bgee" id="ENSMUSG00000047844">
    <property type="expression patterns" value="Expressed in yolk sac and 73 other cell types or tissues"/>
</dbReference>
<dbReference type="ExpressionAtlas" id="Q9CWT2">
    <property type="expression patterns" value="baseline and differential"/>
</dbReference>
<dbReference type="GO" id="GO:0005737">
    <property type="term" value="C:cytoplasm"/>
    <property type="evidence" value="ECO:0000314"/>
    <property type="project" value="UniProtKB"/>
</dbReference>
<dbReference type="GO" id="GO:0005874">
    <property type="term" value="C:microtubule"/>
    <property type="evidence" value="ECO:0000250"/>
    <property type="project" value="UniProtKB"/>
</dbReference>
<dbReference type="GO" id="GO:0005634">
    <property type="term" value="C:nucleus"/>
    <property type="evidence" value="ECO:0000250"/>
    <property type="project" value="UniProtKB"/>
</dbReference>
<dbReference type="GO" id="GO:0000922">
    <property type="term" value="C:spindle pole"/>
    <property type="evidence" value="ECO:0000250"/>
    <property type="project" value="UniProtKB"/>
</dbReference>
<dbReference type="GO" id="GO:0043014">
    <property type="term" value="F:alpha-tubulin binding"/>
    <property type="evidence" value="ECO:0000250"/>
    <property type="project" value="UniProtKB"/>
</dbReference>
<dbReference type="GO" id="GO:0046872">
    <property type="term" value="F:metal ion binding"/>
    <property type="evidence" value="ECO:0007669"/>
    <property type="project" value="UniProtKB-KW"/>
</dbReference>
<dbReference type="GO" id="GO:0140678">
    <property type="term" value="F:molecular function inhibitor activity"/>
    <property type="evidence" value="ECO:0000314"/>
    <property type="project" value="UniProtKB"/>
</dbReference>
<dbReference type="GO" id="GO:0007059">
    <property type="term" value="P:chromosome segregation"/>
    <property type="evidence" value="ECO:0000250"/>
    <property type="project" value="UniProtKB"/>
</dbReference>
<dbReference type="GO" id="GO:0031397">
    <property type="term" value="P:negative regulation of protein ubiquitination"/>
    <property type="evidence" value="ECO:0000314"/>
    <property type="project" value="UniProtKB"/>
</dbReference>
<dbReference type="GO" id="GO:1904428">
    <property type="term" value="P:negative regulation of tubulin deacetylation"/>
    <property type="evidence" value="ECO:0000250"/>
    <property type="project" value="UniProtKB"/>
</dbReference>
<dbReference type="GO" id="GO:0007346">
    <property type="term" value="P:regulation of mitotic cell cycle"/>
    <property type="evidence" value="ECO:0000315"/>
    <property type="project" value="UniProtKB"/>
</dbReference>
<dbReference type="InterPro" id="IPR007623">
    <property type="entry name" value="BEX"/>
</dbReference>
<dbReference type="InterPro" id="IPR021156">
    <property type="entry name" value="TF_A-like/BEX"/>
</dbReference>
<dbReference type="PANTHER" id="PTHR13987">
    <property type="entry name" value="PROTEIN BEX4"/>
    <property type="match status" value="1"/>
</dbReference>
<dbReference type="PANTHER" id="PTHR13987:SF3">
    <property type="entry name" value="PROTEIN BEX4"/>
    <property type="match status" value="1"/>
</dbReference>
<dbReference type="Pfam" id="PF04538">
    <property type="entry name" value="BEX"/>
    <property type="match status" value="1"/>
</dbReference>
<dbReference type="PIRSF" id="PIRSF008633">
    <property type="entry name" value="BEX"/>
    <property type="match status" value="1"/>
</dbReference>
<feature type="chain" id="PRO_0000229784" description="Protein BEX4">
    <location>
        <begin position="1"/>
        <end position="118"/>
    </location>
</feature>
<feature type="region of interest" description="Disordered" evidence="4">
    <location>
        <begin position="14"/>
        <end position="50"/>
    </location>
</feature>
<feature type="region of interest" description="Interaction with alpha-tubulin" evidence="2">
    <location>
        <begin position="30"/>
        <end position="118"/>
    </location>
</feature>
<feature type="region of interest" description="Interaction with SIRT2" evidence="2">
    <location>
        <begin position="30"/>
        <end position="88"/>
    </location>
</feature>
<feature type="compositionally biased region" description="Basic and acidic residues" evidence="4">
    <location>
        <begin position="28"/>
        <end position="44"/>
    </location>
</feature>
<feature type="binding site" evidence="3">
    <location>
        <position position="115"/>
    </location>
    <ligand>
        <name>Zn(2+)</name>
        <dbReference type="ChEBI" id="CHEBI:29105"/>
        <note>ligand shared with FEM1B</note>
    </ligand>
</feature>
<keyword id="KW-0963">Cytoplasm</keyword>
<keyword id="KW-0206">Cytoskeleton</keyword>
<keyword id="KW-0479">Metal-binding</keyword>
<keyword id="KW-0539">Nucleus</keyword>
<keyword id="KW-1185">Reference proteome</keyword>
<keyword id="KW-0832">Ubl conjugation</keyword>
<keyword id="KW-0862">Zinc</keyword>
<comment type="function">
    <text evidence="2 7">May play a role in microtubule deacetylation by negatively regulating the SIRT2 deacetylase activity toward alpha-tubulin and thereby participate in the control of cell cycle progression and genomic stability (By similarity). In absence of reductive stress, acts as a pseudosubstrate for the CRL2(FEM1B) complex: associates with FEM1B via zinc, thereby preventing association between FEM1B and its substrates (PubMed:34562363).</text>
</comment>
<comment type="subunit">
    <text evidence="2">Interacts with alpha-tubulin. Interacts with SIRT2.</text>
</comment>
<comment type="subcellular location">
    <subcellularLocation>
        <location evidence="2">Cytoplasm</location>
        <location evidence="2">Cytoskeleton</location>
        <location evidence="2">Spindle pole</location>
    </subcellularLocation>
    <subcellularLocation>
        <location evidence="2">Nucleus</location>
    </subcellularLocation>
    <subcellularLocation>
        <location evidence="6">Cytoplasm</location>
    </subcellularLocation>
    <text evidence="2">Also localizes to microtubules.</text>
</comment>
<comment type="tissue specificity">
    <text evidence="6">Expressed in both Sertoli and germ cells as well as interstitial area of the testis (at protein level).</text>
</comment>
<comment type="induction">
    <text evidence="5 6">Up-regulated by cadmium in testis (at protein level) (PubMed:28295929). Up-regulated by curcumin (PubMed:28145533).</text>
</comment>
<comment type="PTM">
    <text evidence="1">Ubiquitinated and degraded by the proteasome.</text>
</comment>
<comment type="similarity">
    <text evidence="9">Belongs to the BEX family.</text>
</comment>
<evidence type="ECO:0000250" key="1">
    <source>
        <dbReference type="UniProtKB" id="Q3MKP9"/>
    </source>
</evidence>
<evidence type="ECO:0000250" key="2">
    <source>
        <dbReference type="UniProtKB" id="Q9NWD9"/>
    </source>
</evidence>
<evidence type="ECO:0000250" key="3">
    <source>
        <dbReference type="UniProtKB" id="Q9WTZ9"/>
    </source>
</evidence>
<evidence type="ECO:0000256" key="4">
    <source>
        <dbReference type="SAM" id="MobiDB-lite"/>
    </source>
</evidence>
<evidence type="ECO:0000269" key="5">
    <source>
    </source>
</evidence>
<evidence type="ECO:0000269" key="6">
    <source>
    </source>
</evidence>
<evidence type="ECO:0000269" key="7">
    <source>
    </source>
</evidence>
<evidence type="ECO:0000303" key="8">
    <source>
    </source>
</evidence>
<evidence type="ECO:0000305" key="9"/>
<evidence type="ECO:0000312" key="10">
    <source>
        <dbReference type="MGI" id="MGI:3606746"/>
    </source>
</evidence>
<accession>Q9CWT2</accession>
<sequence length="118" mass="13820">MASKFKQVILDLTVEKDKKDKKGGKASKQSEEEPHHLEEVENKKPGGNVRRKVRRLVPNFLWAIPNRHVDRNEGGEDVGRFVVQGTEVKRKTTEQQVRPYRRFRTPEPDNHYDFCLIP</sequence>
<name>BEX4_MOUSE</name>
<reference key="1">
    <citation type="journal article" date="2005" name="Gene">
        <title>Characterization of the Bex gene family in humans, mice, and rats.</title>
        <authorList>
            <person name="Alvarez E."/>
            <person name="Zhou W."/>
            <person name="Witta S.E."/>
            <person name="Freed C.R."/>
        </authorList>
    </citation>
    <scope>NUCLEOTIDE SEQUENCE [MRNA]</scope>
    <source>
        <strain>C57BL/6J</strain>
    </source>
</reference>
<reference key="2">
    <citation type="journal article" date="2005" name="Science">
        <title>The transcriptional landscape of the mammalian genome.</title>
        <authorList>
            <person name="Carninci P."/>
            <person name="Kasukawa T."/>
            <person name="Katayama S."/>
            <person name="Gough J."/>
            <person name="Frith M.C."/>
            <person name="Maeda N."/>
            <person name="Oyama R."/>
            <person name="Ravasi T."/>
            <person name="Lenhard B."/>
            <person name="Wells C."/>
            <person name="Kodzius R."/>
            <person name="Shimokawa K."/>
            <person name="Bajic V.B."/>
            <person name="Brenner S.E."/>
            <person name="Batalov S."/>
            <person name="Forrest A.R."/>
            <person name="Zavolan M."/>
            <person name="Davis M.J."/>
            <person name="Wilming L.G."/>
            <person name="Aidinis V."/>
            <person name="Allen J.E."/>
            <person name="Ambesi-Impiombato A."/>
            <person name="Apweiler R."/>
            <person name="Aturaliya R.N."/>
            <person name="Bailey T.L."/>
            <person name="Bansal M."/>
            <person name="Baxter L."/>
            <person name="Beisel K.W."/>
            <person name="Bersano T."/>
            <person name="Bono H."/>
            <person name="Chalk A.M."/>
            <person name="Chiu K.P."/>
            <person name="Choudhary V."/>
            <person name="Christoffels A."/>
            <person name="Clutterbuck D.R."/>
            <person name="Crowe M.L."/>
            <person name="Dalla E."/>
            <person name="Dalrymple B.P."/>
            <person name="de Bono B."/>
            <person name="Della Gatta G."/>
            <person name="di Bernardo D."/>
            <person name="Down T."/>
            <person name="Engstrom P."/>
            <person name="Fagiolini M."/>
            <person name="Faulkner G."/>
            <person name="Fletcher C.F."/>
            <person name="Fukushima T."/>
            <person name="Furuno M."/>
            <person name="Futaki S."/>
            <person name="Gariboldi M."/>
            <person name="Georgii-Hemming P."/>
            <person name="Gingeras T.R."/>
            <person name="Gojobori T."/>
            <person name="Green R.E."/>
            <person name="Gustincich S."/>
            <person name="Harbers M."/>
            <person name="Hayashi Y."/>
            <person name="Hensch T.K."/>
            <person name="Hirokawa N."/>
            <person name="Hill D."/>
            <person name="Huminiecki L."/>
            <person name="Iacono M."/>
            <person name="Ikeo K."/>
            <person name="Iwama A."/>
            <person name="Ishikawa T."/>
            <person name="Jakt M."/>
            <person name="Kanapin A."/>
            <person name="Katoh M."/>
            <person name="Kawasawa Y."/>
            <person name="Kelso J."/>
            <person name="Kitamura H."/>
            <person name="Kitano H."/>
            <person name="Kollias G."/>
            <person name="Krishnan S.P."/>
            <person name="Kruger A."/>
            <person name="Kummerfeld S.K."/>
            <person name="Kurochkin I.V."/>
            <person name="Lareau L.F."/>
            <person name="Lazarevic D."/>
            <person name="Lipovich L."/>
            <person name="Liu J."/>
            <person name="Liuni S."/>
            <person name="McWilliam S."/>
            <person name="Madan Babu M."/>
            <person name="Madera M."/>
            <person name="Marchionni L."/>
            <person name="Matsuda H."/>
            <person name="Matsuzawa S."/>
            <person name="Miki H."/>
            <person name="Mignone F."/>
            <person name="Miyake S."/>
            <person name="Morris K."/>
            <person name="Mottagui-Tabar S."/>
            <person name="Mulder N."/>
            <person name="Nakano N."/>
            <person name="Nakauchi H."/>
            <person name="Ng P."/>
            <person name="Nilsson R."/>
            <person name="Nishiguchi S."/>
            <person name="Nishikawa S."/>
            <person name="Nori F."/>
            <person name="Ohara O."/>
            <person name="Okazaki Y."/>
            <person name="Orlando V."/>
            <person name="Pang K.C."/>
            <person name="Pavan W.J."/>
            <person name="Pavesi G."/>
            <person name="Pesole G."/>
            <person name="Petrovsky N."/>
            <person name="Piazza S."/>
            <person name="Reed J."/>
            <person name="Reid J.F."/>
            <person name="Ring B.Z."/>
            <person name="Ringwald M."/>
            <person name="Rost B."/>
            <person name="Ruan Y."/>
            <person name="Salzberg S.L."/>
            <person name="Sandelin A."/>
            <person name="Schneider C."/>
            <person name="Schoenbach C."/>
            <person name="Sekiguchi K."/>
            <person name="Semple C.A."/>
            <person name="Seno S."/>
            <person name="Sessa L."/>
            <person name="Sheng Y."/>
            <person name="Shibata Y."/>
            <person name="Shimada H."/>
            <person name="Shimada K."/>
            <person name="Silva D."/>
            <person name="Sinclair B."/>
            <person name="Sperling S."/>
            <person name="Stupka E."/>
            <person name="Sugiura K."/>
            <person name="Sultana R."/>
            <person name="Takenaka Y."/>
            <person name="Taki K."/>
            <person name="Tammoja K."/>
            <person name="Tan S.L."/>
            <person name="Tang S."/>
            <person name="Taylor M.S."/>
            <person name="Tegner J."/>
            <person name="Teichmann S.A."/>
            <person name="Ueda H.R."/>
            <person name="van Nimwegen E."/>
            <person name="Verardo R."/>
            <person name="Wei C.L."/>
            <person name="Yagi K."/>
            <person name="Yamanishi H."/>
            <person name="Zabarovsky E."/>
            <person name="Zhu S."/>
            <person name="Zimmer A."/>
            <person name="Hide W."/>
            <person name="Bult C."/>
            <person name="Grimmond S.M."/>
            <person name="Teasdale R.D."/>
            <person name="Liu E.T."/>
            <person name="Brusic V."/>
            <person name="Quackenbush J."/>
            <person name="Wahlestedt C."/>
            <person name="Mattick J.S."/>
            <person name="Hume D.A."/>
            <person name="Kai C."/>
            <person name="Sasaki D."/>
            <person name="Tomaru Y."/>
            <person name="Fukuda S."/>
            <person name="Kanamori-Katayama M."/>
            <person name="Suzuki M."/>
            <person name="Aoki J."/>
            <person name="Arakawa T."/>
            <person name="Iida J."/>
            <person name="Imamura K."/>
            <person name="Itoh M."/>
            <person name="Kato T."/>
            <person name="Kawaji H."/>
            <person name="Kawagashira N."/>
            <person name="Kawashima T."/>
            <person name="Kojima M."/>
            <person name="Kondo S."/>
            <person name="Konno H."/>
            <person name="Nakano K."/>
            <person name="Ninomiya N."/>
            <person name="Nishio T."/>
            <person name="Okada M."/>
            <person name="Plessy C."/>
            <person name="Shibata K."/>
            <person name="Shiraki T."/>
            <person name="Suzuki S."/>
            <person name="Tagami M."/>
            <person name="Waki K."/>
            <person name="Watahiki A."/>
            <person name="Okamura-Oho Y."/>
            <person name="Suzuki H."/>
            <person name="Kawai J."/>
            <person name="Hayashizaki Y."/>
        </authorList>
    </citation>
    <scope>NUCLEOTIDE SEQUENCE [LARGE SCALE MRNA]</scope>
    <source>
        <strain>C57BL/6J</strain>
    </source>
</reference>
<reference key="3">
    <citation type="journal article" date="2017" name="J. Biochem. Mol. Toxicol.">
        <title>BEX4 upregulation alters Sertoli cell growth properties and protein expression profiles: An explanation for cadmium-induced testicular Sertoli cell injury.</title>
        <authorList>
            <person name="Yu W."/>
            <person name="Yaping L."/>
            <person name="Mingjun W."/>
            <person name="Jie H."/>
            <person name="Xiaogang L."/>
            <person name="Gang L."/>
        </authorList>
    </citation>
    <scope>SUBCELLULAR LOCATION</scope>
    <scope>TISSUE SPECIFICITY</scope>
    <scope>INDUCTION BY CADMIUM</scope>
</reference>
<reference key="4">
    <citation type="journal article" date="2017" name="Sci. Rep.">
        <title>Induction of Bex genes by curcumin is associated with apoptosis and activation of p53 in N2a neuroblastoma cells.</title>
        <authorList>
            <person name="Sidhar H."/>
            <person name="Giri R.K."/>
        </authorList>
    </citation>
    <scope>INDUCTION BY CURCUMIN</scope>
</reference>
<reference key="5">
    <citation type="journal article" date="2021" name="Cell">
        <title>Structural basis and regulation of the reductive stress response.</title>
        <authorList>
            <person name="Manford A.G."/>
            <person name="Mena E.L."/>
            <person name="Shih K.Y."/>
            <person name="Gee C.L."/>
            <person name="McMinimy R."/>
            <person name="Martinez-Gonzalez B."/>
            <person name="Sherriff R."/>
            <person name="Lew B."/>
            <person name="Zoltek M."/>
            <person name="Rodriguez-Perez F."/>
            <person name="Woldesenbet M."/>
            <person name="Kuriyan J."/>
            <person name="Rape M."/>
        </authorList>
    </citation>
    <scope>FUNCTION</scope>
</reference>
<organism>
    <name type="scientific">Mus musculus</name>
    <name type="common">Mouse</name>
    <dbReference type="NCBI Taxonomy" id="10090"/>
    <lineage>
        <taxon>Eukaryota</taxon>
        <taxon>Metazoa</taxon>
        <taxon>Chordata</taxon>
        <taxon>Craniata</taxon>
        <taxon>Vertebrata</taxon>
        <taxon>Euteleostomi</taxon>
        <taxon>Mammalia</taxon>
        <taxon>Eutheria</taxon>
        <taxon>Euarchontoglires</taxon>
        <taxon>Glires</taxon>
        <taxon>Rodentia</taxon>
        <taxon>Myomorpha</taxon>
        <taxon>Muroidea</taxon>
        <taxon>Muridae</taxon>
        <taxon>Murinae</taxon>
        <taxon>Mus</taxon>
        <taxon>Mus</taxon>
    </lineage>
</organism>
<proteinExistence type="evidence at protein level"/>